<comment type="function">
    <text evidence="2 3">Involved in DNA damage response and in transcriptional regulation through histone methyltransferase (HMT) complexes. Plays a role in early development. In DNA damage response is required for cell survival after ionizing radiation. In vitro shown to be involved in the homologous recombination mechanism for the repair of double-strand breaks (DSBs). Its localization to DNA damage foci requires RNF8 and UBE2N. Recruits TP53BP1 to DNA damage foci and, at least in particular repair processes, effective DNA damage response appears to require the association with TP53BP1 phosphorylated by ATM at 'Ser-25'. Together with TP53BP1 regulates ATM association. Proposed to recruit PAGR1 to sites of DNA damage and the PAGR1:PAXIP1 complex is required for cell survival in response to DNA damage; the function is probably independent of MLL-containing histone methyltransferase (HMT) complexes. However, this function has been questioned (By similarity). Promotes ubiquitination of PCNA following UV irradiation and may regulate recruitment of polymerase eta and RAD51 to chromatin after DNA damage. Proposed to be involved in transcriptional regulation by linking MLL-containing histone methyltransferase (HMT) complexes to gene promoters by interacting with promoter-bound transcription factors such as PAX2. Associates with gene promoters that are known to be regulated by KMT2D/MLL2. During immunoglobulin class switching in activated B-cells is involved in trimethylation of histone H3 at 'Lys-4' and in transcription initiation of downstream switch regions at the immunoglobulin heavy-chain (Igh) locus; this function appears to involve the recruitment of MLL-containing HMT complexes. Conflictingly, its function in transcriptional regulation during immunoglobulin class switching is reported to be independent of the MLL2/MLL3 complex (By similarity).</text>
</comment>
<comment type="subunit">
    <text evidence="2 3">Interacts with the C-terminal transactivation domain of PAX2 (By similarity). Forms a constitutive complex with PAGR1 independently of the MLL2/MLL3 complex. Interacts with TP53BP1 (when phosphorylated at the N-terminus by ATM). Interacts with HLTF. Component of the KMT2 family MLL2/MLL3 complex (also named ASCOM complex), at least composed of the HMTs KMT2D and/or KMT2C, the common subunits ASH2L, RBBP5, WDR5 and DPY30, and the complex type-specific subunits PAXIP1/PTIP, PAGR1, NCOA6 and KDM6A; required for the association of PAGR1 with the MLL2/MLL3 complex (By similarity). Interacts with NUPR1; this interaction prevents PAXIP1 inhibition of PAX2 transcription factor activity (By similarity).</text>
</comment>
<comment type="subcellular location">
    <subcellularLocation>
        <location evidence="2">Nucleus matrix</location>
    </subcellularLocation>
    <subcellularLocation>
        <location evidence="3">Chromosome</location>
    </subcellularLocation>
    <text evidence="3">Localizes to DNA damage foci upon ionizing radiation.</text>
</comment>
<comment type="domain">
    <text evidence="2">The BRCT 1 and 2 domains mediate the interaction with PAGR1A.</text>
</comment>
<comment type="domain">
    <text evidence="2">The BRCT 5 and 6 domains mediate the association with the MLL2/MLL3 complex (By similarity). The BRCT 5 and 6 domains function as a single module and are necessary and sufficient for in vitro phospho-specific binding (substrates phosphorylated by the kinases ataxia telangiectasia-mutated (ATM), ataxia telangiectasia and RAD3-related (ATR) in response to gamma irradiation). In contrast, in vivo two pairs of BRCT domains (3-6) bind to phosphorylated TP53BP1 much more efficiently.</text>
</comment>
<comment type="caution">
    <text evidence="7">The terminology of MLL proteins in mammalia is not consistent also concerning the terminology of MLL protein-containing complexes. The decribed MLL2/MLL3 complex is commonly described as MLL3/MLL4 complex in literature.</text>
</comment>
<name>PAXI1_BOVIN</name>
<protein>
    <recommendedName>
        <fullName>PAX-interacting protein 1</fullName>
    </recommendedName>
    <alternativeName>
        <fullName>PAX transactivation activation domain-interacting protein</fullName>
    </alternativeName>
</protein>
<keyword id="KW-0158">Chromosome</keyword>
<keyword id="KW-0227">DNA damage</keyword>
<keyword id="KW-0233">DNA recombination</keyword>
<keyword id="KW-0234">DNA repair</keyword>
<keyword id="KW-0539">Nucleus</keyword>
<keyword id="KW-0597">Phosphoprotein</keyword>
<keyword id="KW-1185">Reference proteome</keyword>
<keyword id="KW-0677">Repeat</keyword>
<keyword id="KW-0804">Transcription</keyword>
<keyword id="KW-0805">Transcription regulation</keyword>
<reference key="1">
    <citation type="submission" date="2006-10" db="EMBL/GenBank/DDBJ databases">
        <authorList>
            <consortium name="NIH - Mammalian Gene Collection (MGC) project"/>
        </authorList>
    </citation>
    <scope>NUCLEOTIDE SEQUENCE [LARGE SCALE MRNA]</scope>
    <source>
        <strain>Hereford</strain>
        <tissue>Fetal liver</tissue>
    </source>
</reference>
<proteinExistence type="evidence at transcript level"/>
<organism>
    <name type="scientific">Bos taurus</name>
    <name type="common">Bovine</name>
    <dbReference type="NCBI Taxonomy" id="9913"/>
    <lineage>
        <taxon>Eukaryota</taxon>
        <taxon>Metazoa</taxon>
        <taxon>Chordata</taxon>
        <taxon>Craniata</taxon>
        <taxon>Vertebrata</taxon>
        <taxon>Euteleostomi</taxon>
        <taxon>Mammalia</taxon>
        <taxon>Eutheria</taxon>
        <taxon>Laurasiatheria</taxon>
        <taxon>Artiodactyla</taxon>
        <taxon>Ruminantia</taxon>
        <taxon>Pecora</taxon>
        <taxon>Bovidae</taxon>
        <taxon>Bovinae</taxon>
        <taxon>Bos</taxon>
    </lineage>
</organism>
<accession>A0JNA8</accession>
<feature type="chain" id="PRO_0000296261" description="PAX-interacting protein 1">
    <location>
        <begin position="1"/>
        <end position="984"/>
    </location>
</feature>
<feature type="domain" description="BRCT 1" evidence="5">
    <location>
        <begin position="8"/>
        <end position="93"/>
    </location>
</feature>
<feature type="domain" description="BRCT 2" evidence="5">
    <location>
        <begin position="94"/>
        <end position="183"/>
    </location>
</feature>
<feature type="domain" description="BRCT 3" evidence="5">
    <location>
        <begin position="516"/>
        <end position="609"/>
    </location>
</feature>
<feature type="domain" description="BRCT 4" evidence="5">
    <location>
        <begin position="616"/>
        <end position="704"/>
    </location>
</feature>
<feature type="domain" description="BRCT 5" evidence="5">
    <location>
        <begin position="781"/>
        <end position="862"/>
    </location>
</feature>
<feature type="domain" description="BRCT 6" evidence="5">
    <location>
        <begin position="883"/>
        <end position="924"/>
    </location>
</feature>
<feature type="region of interest" description="Interaction with PAGR1" evidence="1">
    <location>
        <begin position="94"/>
        <end position="183"/>
    </location>
</feature>
<feature type="region of interest" description="Disordered" evidence="6">
    <location>
        <begin position="187"/>
        <end position="271"/>
    </location>
</feature>
<feature type="region of interest" description="Disordered" evidence="6">
    <location>
        <begin position="417"/>
        <end position="509"/>
    </location>
</feature>
<feature type="region of interest" description="Interaction with TP53BP1" evidence="1">
    <location>
        <begin position="505"/>
        <end position="984"/>
    </location>
</feature>
<feature type="region of interest" description="Disordered" evidence="6">
    <location>
        <begin position="750"/>
        <end position="771"/>
    </location>
</feature>
<feature type="short sequence motif" description="Nuclear localization signal" evidence="4">
    <location>
        <begin position="583"/>
        <end position="600"/>
    </location>
</feature>
<feature type="compositionally biased region" description="Acidic residues" evidence="6">
    <location>
        <begin position="188"/>
        <end position="208"/>
    </location>
</feature>
<feature type="compositionally biased region" description="Low complexity" evidence="6">
    <location>
        <begin position="217"/>
        <end position="229"/>
    </location>
</feature>
<feature type="compositionally biased region" description="Pro residues" evidence="6">
    <location>
        <begin position="424"/>
        <end position="454"/>
    </location>
</feature>
<feature type="compositionally biased region" description="Low complexity" evidence="6">
    <location>
        <begin position="455"/>
        <end position="485"/>
    </location>
</feature>
<feature type="compositionally biased region" description="Pro residues" evidence="6">
    <location>
        <begin position="486"/>
        <end position="499"/>
    </location>
</feature>
<feature type="compositionally biased region" description="Polar residues" evidence="6">
    <location>
        <begin position="752"/>
        <end position="761"/>
    </location>
</feature>
<feature type="modified residue" description="Phosphoserine" evidence="2">
    <location>
        <position position="227"/>
    </location>
</feature>
<feature type="modified residue" description="Phosphoserine" evidence="3">
    <location>
        <position position="235"/>
    </location>
</feature>
<evidence type="ECO:0000250" key="1"/>
<evidence type="ECO:0000250" key="2">
    <source>
        <dbReference type="UniProtKB" id="Q6NZQ4"/>
    </source>
</evidence>
<evidence type="ECO:0000250" key="3">
    <source>
        <dbReference type="UniProtKB" id="Q6ZW49"/>
    </source>
</evidence>
<evidence type="ECO:0000255" key="4"/>
<evidence type="ECO:0000255" key="5">
    <source>
        <dbReference type="PROSITE-ProRule" id="PRU00033"/>
    </source>
</evidence>
<evidence type="ECO:0000256" key="6">
    <source>
        <dbReference type="SAM" id="MobiDB-lite"/>
    </source>
</evidence>
<evidence type="ECO:0000305" key="7"/>
<gene>
    <name type="primary">PAXIP1</name>
</gene>
<dbReference type="EMBL" id="BC126589">
    <property type="protein sequence ID" value="AAI26590.1"/>
    <property type="molecule type" value="mRNA"/>
</dbReference>
<dbReference type="RefSeq" id="NP_001071385.1">
    <property type="nucleotide sequence ID" value="NM_001077917.1"/>
</dbReference>
<dbReference type="RefSeq" id="XP_059741522.1">
    <property type="nucleotide sequence ID" value="XM_059885539.1"/>
</dbReference>
<dbReference type="SMR" id="A0JNA8"/>
<dbReference type="FunCoup" id="A0JNA8">
    <property type="interactions" value="4128"/>
</dbReference>
<dbReference type="STRING" id="9913.ENSBTAP00000055051"/>
<dbReference type="GeneID" id="513213"/>
<dbReference type="KEGG" id="bta:513213"/>
<dbReference type="CTD" id="22976"/>
<dbReference type="VEuPathDB" id="HostDB:ENSBTAG00000017505"/>
<dbReference type="eggNOG" id="KOG2043">
    <property type="taxonomic scope" value="Eukaryota"/>
</dbReference>
<dbReference type="HOGENOM" id="CLU_009382_0_0_1"/>
<dbReference type="InParanoid" id="A0JNA8"/>
<dbReference type="OrthoDB" id="342264at2759"/>
<dbReference type="Reactome" id="R-BTA-5693571">
    <property type="pathway name" value="Nonhomologous End-Joining (NHEJ)"/>
</dbReference>
<dbReference type="Reactome" id="R-BTA-9772755">
    <property type="pathway name" value="Formation of WDR5-containing histone-modifying complexes"/>
</dbReference>
<dbReference type="Reactome" id="R-BTA-9818564">
    <property type="pathway name" value="Epigenetic regulation of gene expression by MLL3 and MLL4 complexes"/>
</dbReference>
<dbReference type="Proteomes" id="UP000009136">
    <property type="component" value="Chromosome 4"/>
</dbReference>
<dbReference type="Bgee" id="ENSBTAG00000017505">
    <property type="expression patterns" value="Expressed in oocyte and 104 other cell types or tissues"/>
</dbReference>
<dbReference type="GO" id="GO:0005694">
    <property type="term" value="C:chromosome"/>
    <property type="evidence" value="ECO:0007669"/>
    <property type="project" value="UniProtKB-SubCell"/>
</dbReference>
<dbReference type="GO" id="GO:0016363">
    <property type="term" value="C:nuclear matrix"/>
    <property type="evidence" value="ECO:0007669"/>
    <property type="project" value="UniProtKB-SubCell"/>
</dbReference>
<dbReference type="GO" id="GO:0005634">
    <property type="term" value="C:nucleus"/>
    <property type="evidence" value="ECO:0000318"/>
    <property type="project" value="GO_Central"/>
</dbReference>
<dbReference type="GO" id="GO:0006310">
    <property type="term" value="P:DNA recombination"/>
    <property type="evidence" value="ECO:0007669"/>
    <property type="project" value="UniProtKB-KW"/>
</dbReference>
<dbReference type="GO" id="GO:0006281">
    <property type="term" value="P:DNA repair"/>
    <property type="evidence" value="ECO:0007669"/>
    <property type="project" value="UniProtKB-KW"/>
</dbReference>
<dbReference type="GO" id="GO:0043433">
    <property type="term" value="P:negative regulation of DNA-binding transcription factor activity"/>
    <property type="evidence" value="ECO:0000250"/>
    <property type="project" value="UniProtKB"/>
</dbReference>
<dbReference type="GO" id="GO:0060261">
    <property type="term" value="P:positive regulation of transcription initiation by RNA polymerase II"/>
    <property type="evidence" value="ECO:0000318"/>
    <property type="project" value="GO_Central"/>
</dbReference>
<dbReference type="CDD" id="cd17714">
    <property type="entry name" value="BRCT_PAXIP1_rpt1"/>
    <property type="match status" value="1"/>
</dbReference>
<dbReference type="CDD" id="cd17710">
    <property type="entry name" value="BRCT_PAXIP1_rpt2"/>
    <property type="match status" value="1"/>
</dbReference>
<dbReference type="CDD" id="cd17711">
    <property type="entry name" value="BRCT_PAXIP1_rpt3"/>
    <property type="match status" value="1"/>
</dbReference>
<dbReference type="CDD" id="cd17730">
    <property type="entry name" value="BRCT_PAXIP1_rpt4"/>
    <property type="match status" value="1"/>
</dbReference>
<dbReference type="CDD" id="cd17712">
    <property type="entry name" value="BRCT_PAXIP1_rpt5"/>
    <property type="match status" value="1"/>
</dbReference>
<dbReference type="CDD" id="cd18440">
    <property type="entry name" value="BRCT_PAXIP1_rpt6"/>
    <property type="match status" value="1"/>
</dbReference>
<dbReference type="FunFam" id="3.40.50.10190:FF:000017">
    <property type="entry name" value="PAX interacting protein 1"/>
    <property type="match status" value="1"/>
</dbReference>
<dbReference type="FunFam" id="3.40.50.10190:FF:000036">
    <property type="entry name" value="PAX interacting protein 1"/>
    <property type="match status" value="1"/>
</dbReference>
<dbReference type="FunFam" id="3.40.50.10190:FF:000046">
    <property type="entry name" value="PAX interacting protein 1"/>
    <property type="match status" value="1"/>
</dbReference>
<dbReference type="Gene3D" id="3.40.50.10190">
    <property type="entry name" value="BRCT domain"/>
    <property type="match status" value="5"/>
</dbReference>
<dbReference type="InterPro" id="IPR001357">
    <property type="entry name" value="BRCT_dom"/>
</dbReference>
<dbReference type="InterPro" id="IPR036420">
    <property type="entry name" value="BRCT_dom_sf"/>
</dbReference>
<dbReference type="InterPro" id="IPR051579">
    <property type="entry name" value="DDR_Transcriptional_Reg"/>
</dbReference>
<dbReference type="PANTHER" id="PTHR23196">
    <property type="entry name" value="PAX TRANSCRIPTION ACTIVATION DOMAIN INTERACTING PROTEIN"/>
    <property type="match status" value="1"/>
</dbReference>
<dbReference type="PANTHER" id="PTHR23196:SF1">
    <property type="entry name" value="PAX-INTERACTING PROTEIN 1"/>
    <property type="match status" value="1"/>
</dbReference>
<dbReference type="Pfam" id="PF00533">
    <property type="entry name" value="BRCT"/>
    <property type="match status" value="1"/>
</dbReference>
<dbReference type="Pfam" id="PF16589">
    <property type="entry name" value="BRCT_2"/>
    <property type="match status" value="1"/>
</dbReference>
<dbReference type="Pfam" id="PF12738">
    <property type="entry name" value="PTCB-BRCT"/>
    <property type="match status" value="2"/>
</dbReference>
<dbReference type="Pfam" id="PF16770">
    <property type="entry name" value="RTT107_BRCT_5"/>
    <property type="match status" value="1"/>
</dbReference>
<dbReference type="SMART" id="SM00292">
    <property type="entry name" value="BRCT"/>
    <property type="match status" value="6"/>
</dbReference>
<dbReference type="SUPFAM" id="SSF52113">
    <property type="entry name" value="BRCT domain"/>
    <property type="match status" value="5"/>
</dbReference>
<dbReference type="PROSITE" id="PS50172">
    <property type="entry name" value="BRCT"/>
    <property type="match status" value="5"/>
</dbReference>
<sequence length="984" mass="109167">MSGQVPRVPEEMFKEVKYYAVGDLDPQVIQLLKAGKAKEVSYNALASHIISEDGDNPEVGEAREVFDLPVVKPSWVILSVQCGALLPVNGFSPESCQIFFGITACLSQVSPEDRSALWAMLTFHGGGCQLNLNRKCTHLVVPEPKGEKYECALRRASIKIVTPDWVLDCISEKTRKDEALYHPRLIVYEEEEEEEEEEEGAGNEEPDSPNEGSTDGKSSPASSQEGSPSGEPPFSPKSSAEKSKGELMFDDSSDSSPEKQERNLNWTPAEVPQLAAAKRRLPPGKEPGLINLCANVPPVPGGILPPEVRGSLLAPGQSLQGPERPEVMAAWSPAMRTLRNITNNADIQQMSSRPSNVAHILQSLSAPTKTLEQQVNHSQQGPASAVLLGQVKVAPEPAPAPQPILHLQPQQLLQLQQQHLAQQPYPPPPPHPFPPPPAHPHQFPQPPLQRPQPPLQQQQLSHLQQQQLQHLQRLQQMQPTPTAQLPGPPAQALQPPPPQAQAQPPLFGHDPAVEIPEEGFLLGCVFAIADYPEQMSDKQLLATWKRIIQAHGGAVDPTFSSRCTHLLCESQVSGLFAQAMKERKRCITAHWLNTVLKKKKLVPPHRALHFPVAFPPGGKPCSQHIISVTGFVDNDRDDLKLMAYLAGAKYTGYLCRSNTVLICREPTGLKYEKAKEWRIPCVNAQWLGDILLGNFEALRQTQYGRYTAFGLQDPFAPTPQLVLSLLDAWRVPLKVSSELLMGVRLPPKPKQNEVTNVQPSSKRARIEDIPPPTKKLTPELTPFVLFTGFEPVQVQQYIKKLYILGGEVAESAQKCTHLIASKVTRTVKFLTAISVVKHIVTPEWLEECFKCQKFVDEQNYLLRDAEAEVLFSFSLEESLRRAHASPLFKAKYFYITPGICPSLSTMKAIVECAGGKVLSRQPSFRKLMEHKQNKSLSEIVLISCENDLHLCREYFARGIDVHNAEFVLTGVLTQTLDYESYKFN</sequence>